<keyword id="KW-1003">Cell membrane</keyword>
<keyword id="KW-0325">Glycoprotein</keyword>
<keyword id="KW-0336">GPI-anchor</keyword>
<keyword id="KW-0449">Lipoprotein</keyword>
<keyword id="KW-0472">Membrane</keyword>
<keyword id="KW-1185">Reference proteome</keyword>
<keyword id="KW-0964">Secreted</keyword>
<keyword id="KW-0732">Signal</keyword>
<organism>
    <name type="scientific">Bos taurus</name>
    <name type="common">Bovine</name>
    <dbReference type="NCBI Taxonomy" id="9913"/>
    <lineage>
        <taxon>Eukaryota</taxon>
        <taxon>Metazoa</taxon>
        <taxon>Chordata</taxon>
        <taxon>Craniata</taxon>
        <taxon>Vertebrata</taxon>
        <taxon>Euteleostomi</taxon>
        <taxon>Mammalia</taxon>
        <taxon>Eutheria</taxon>
        <taxon>Laurasiatheria</taxon>
        <taxon>Artiodactyla</taxon>
        <taxon>Ruminantia</taxon>
        <taxon>Pecora</taxon>
        <taxon>Bovidae</taxon>
        <taxon>Bovinae</taxon>
        <taxon>Bos</taxon>
    </lineage>
</organism>
<evidence type="ECO:0000250" key="1">
    <source>
        <dbReference type="UniProtKB" id="Q9D7S0"/>
    </source>
</evidence>
<evidence type="ECO:0000255" key="2"/>
<evidence type="ECO:0000305" key="3"/>
<proteinExistence type="evidence at transcript level"/>
<feature type="signal peptide" evidence="2">
    <location>
        <begin position="1"/>
        <end position="20"/>
    </location>
</feature>
<feature type="chain" id="PRO_0000317737" description="Ly6/PLAUR domain-containing protein 8">
    <location>
        <begin position="21"/>
        <end position="211"/>
    </location>
</feature>
<feature type="propeptide" id="PRO_0000317738" description="Removed in mature form" evidence="2">
    <location>
        <begin position="212"/>
        <end position="230"/>
    </location>
</feature>
<feature type="domain" description="UPAR/Ly6">
    <location>
        <begin position="125"/>
        <end position="172"/>
    </location>
</feature>
<feature type="lipid moiety-binding region" description="GPI-anchor amidated serine" evidence="2">
    <location>
        <position position="211"/>
    </location>
</feature>
<feature type="glycosylation site" description="N-linked (GlcNAc...) asparagine" evidence="2">
    <location>
        <position position="37"/>
    </location>
</feature>
<feature type="glycosylation site" description="N-linked (GlcNAc...) asparagine" evidence="2">
    <location>
        <position position="44"/>
    </location>
</feature>
<feature type="glycosylation site" description="N-linked (GlcNAc...) asparagine" evidence="2">
    <location>
        <position position="74"/>
    </location>
</feature>
<feature type="glycosylation site" description="N-linked (GlcNAc...) asparagine" evidence="2">
    <location>
        <position position="77"/>
    </location>
</feature>
<feature type="glycosylation site" description="N-linked (GlcNAc...) asparagine" evidence="2">
    <location>
        <position position="90"/>
    </location>
</feature>
<feature type="glycosylation site" description="N-linked (GlcNAc...) asparagine" evidence="2">
    <location>
        <position position="106"/>
    </location>
</feature>
<feature type="glycosylation site" description="N-linked (GlcNAc...) asparagine" evidence="2">
    <location>
        <position position="110"/>
    </location>
</feature>
<feature type="glycosylation site" description="N-linked (GlcNAc...) asparagine" evidence="2">
    <location>
        <position position="132"/>
    </location>
</feature>
<feature type="glycosylation site" description="N-linked (GlcNAc...) asparagine" evidence="2">
    <location>
        <position position="137"/>
    </location>
</feature>
<feature type="glycosylation site" description="N-linked (GlcNAc...) asparagine" evidence="2">
    <location>
        <position position="156"/>
    </location>
</feature>
<feature type="glycosylation site" description="N-linked (GlcNAc...) asparagine" evidence="2">
    <location>
        <position position="168"/>
    </location>
</feature>
<feature type="glycosylation site" description="N-linked (GlcNAc...) asparagine" evidence="2">
    <location>
        <position position="181"/>
    </location>
</feature>
<feature type="glycosylation site" description="N-linked (GlcNAc...) asparagine" evidence="2">
    <location>
        <position position="197"/>
    </location>
</feature>
<feature type="sequence conflict" description="In Ref. 2; AAI33551." ref="2">
    <original>F</original>
    <variation>L</variation>
    <location>
        <position position="154"/>
    </location>
</feature>
<protein>
    <recommendedName>
        <fullName evidence="3">Ly6/PLAUR domain-containing protein 8</fullName>
    </recommendedName>
</protein>
<name>LYPD8_BOVIN</name>
<comment type="function">
    <text evidence="1">Secreted protein specifically required to prevent invasion of Gram-negative bacteria in the inner mucus layer of the colon epithelium, a portion of the large intestine which is free of commensal microbiota. Prevents invasion of flagellated microbiota by binding to the flagellum of bacteria, such as P.mirabilis, thereby inhibiting bacterial motility in the intestinal lumen. Segregation of intestinal bacteria and epithelial cells in the colon is required to preserve intestinal homeostasis.</text>
</comment>
<comment type="subcellular location">
    <subcellularLocation>
        <location evidence="1">Cell membrane</location>
        <topology evidence="1">Lipid-anchor</topology>
        <topology evidence="1">GPI-anchor</topology>
    </subcellularLocation>
    <subcellularLocation>
        <location evidence="1">Secreted</location>
    </subcellularLocation>
    <text evidence="1">Secreted into the lumen of the colon following cleavage of the GPI-anchor.</text>
</comment>
<comment type="PTM">
    <text evidence="1">Highly N-glycosylated. Not O-glycosylated.</text>
</comment>
<comment type="PTM">
    <text evidence="1">GPI-anchored. The GPI-anchor is cleaved, leading to secretion into the colonic lumen.</text>
</comment>
<comment type="similarity">
    <text evidence="3">Belongs to the CNF-like-inhibitor family.</text>
</comment>
<accession>A2VE33</accession>
<accession>F1N1X9</accession>
<gene>
    <name type="primary">LYPD8</name>
</gene>
<sequence>MKSFLFAGIVVVLTVAAVDTLRCIQCNSLKDSCVAKNATECPSNATTSCTSFSTNFYHGEHPTWYEDHACSEENCSNTTVESFTVSVSENETFHFESQCCLGEPCNQTSNTTASPHQVGSGNMECPACYGNNETSCNETRKCYGERCVSIIAEFTNETKTLVLKGCSNVSISTCESLGAGNQTFRGVTFRKFECGDNFSTTTPLATTDTGSQASFTPLALASILLLSLLL</sequence>
<dbReference type="EMBL" id="DAAA02020187">
    <property type="status" value="NOT_ANNOTATED_CDS"/>
    <property type="molecule type" value="Genomic_DNA"/>
</dbReference>
<dbReference type="EMBL" id="BC133550">
    <property type="protein sequence ID" value="AAI33551.1"/>
    <property type="molecule type" value="mRNA"/>
</dbReference>
<dbReference type="RefSeq" id="NP_001075931.1">
    <property type="nucleotide sequence ID" value="NM_001082462.2"/>
</dbReference>
<dbReference type="FunCoup" id="A2VE33">
    <property type="interactions" value="50"/>
</dbReference>
<dbReference type="STRING" id="9913.ENSBTAP00000040995"/>
<dbReference type="GlyCosmos" id="A2VE33">
    <property type="glycosylation" value="13 sites, No reported glycans"/>
</dbReference>
<dbReference type="GlyGen" id="A2VE33">
    <property type="glycosylation" value="13 sites"/>
</dbReference>
<dbReference type="PaxDb" id="9913-ENSBTAP00000040995"/>
<dbReference type="GeneID" id="617425"/>
<dbReference type="KEGG" id="bta:617425"/>
<dbReference type="CTD" id="646627"/>
<dbReference type="eggNOG" id="ENOG502TBDM">
    <property type="taxonomic scope" value="Eukaryota"/>
</dbReference>
<dbReference type="InParanoid" id="A2VE33"/>
<dbReference type="OrthoDB" id="9838086at2759"/>
<dbReference type="TreeFam" id="TF339495"/>
<dbReference type="Proteomes" id="UP000009136">
    <property type="component" value="Unplaced"/>
</dbReference>
<dbReference type="GO" id="GO:0005615">
    <property type="term" value="C:extracellular space"/>
    <property type="evidence" value="ECO:0000250"/>
    <property type="project" value="UniProtKB"/>
</dbReference>
<dbReference type="GO" id="GO:0005886">
    <property type="term" value="C:plasma membrane"/>
    <property type="evidence" value="ECO:0007669"/>
    <property type="project" value="UniProtKB-SubCell"/>
</dbReference>
<dbReference type="GO" id="GO:0098552">
    <property type="term" value="C:side of membrane"/>
    <property type="evidence" value="ECO:0007669"/>
    <property type="project" value="UniProtKB-KW"/>
</dbReference>
<dbReference type="GO" id="GO:0050829">
    <property type="term" value="P:defense response to Gram-negative bacterium"/>
    <property type="evidence" value="ECO:0000250"/>
    <property type="project" value="UniProtKB"/>
</dbReference>
<dbReference type="CDD" id="cd23568">
    <property type="entry name" value="TFP_LU_ECD_LYPD8_rpt1"/>
    <property type="match status" value="1"/>
</dbReference>
<dbReference type="CDD" id="cd23569">
    <property type="entry name" value="TFP_LU_ECD_LYPD8_rpt2"/>
    <property type="match status" value="1"/>
</dbReference>
<dbReference type="Gene3D" id="2.10.60.10">
    <property type="entry name" value="CD59"/>
    <property type="match status" value="1"/>
</dbReference>
<dbReference type="InterPro" id="IPR050918">
    <property type="entry name" value="CNF-like_PLA2_Inhibitor"/>
</dbReference>
<dbReference type="InterPro" id="IPR016054">
    <property type="entry name" value="LY6_UPA_recep-like"/>
</dbReference>
<dbReference type="InterPro" id="IPR045860">
    <property type="entry name" value="Snake_toxin-like_sf"/>
</dbReference>
<dbReference type="PANTHER" id="PTHR20914">
    <property type="entry name" value="LY6/PLAUR DOMAIN-CONTAINING PROTEIN 8"/>
    <property type="match status" value="1"/>
</dbReference>
<dbReference type="PANTHER" id="PTHR20914:SF2">
    <property type="entry name" value="LY6_PLAUR DOMAIN-CONTAINING PROTEIN 8"/>
    <property type="match status" value="1"/>
</dbReference>
<dbReference type="Pfam" id="PF00021">
    <property type="entry name" value="UPAR_LY6"/>
    <property type="match status" value="2"/>
</dbReference>
<reference key="1">
    <citation type="journal article" date="2009" name="Genome Biol.">
        <title>A whole-genome assembly of the domestic cow, Bos taurus.</title>
        <authorList>
            <person name="Zimin A.V."/>
            <person name="Delcher A.L."/>
            <person name="Florea L."/>
            <person name="Kelley D.R."/>
            <person name="Schatz M.C."/>
            <person name="Puiu D."/>
            <person name="Hanrahan F."/>
            <person name="Pertea G."/>
            <person name="Van Tassell C.P."/>
            <person name="Sonstegard T.S."/>
            <person name="Marcais G."/>
            <person name="Roberts M."/>
            <person name="Subramanian P."/>
            <person name="Yorke J.A."/>
            <person name="Salzberg S.L."/>
        </authorList>
    </citation>
    <scope>NUCLEOTIDE SEQUENCE [LARGE SCALE GENOMIC DNA]</scope>
    <source>
        <strain>Hereford</strain>
    </source>
</reference>
<reference key="2">
    <citation type="submission" date="2007-02" db="EMBL/GenBank/DDBJ databases">
        <authorList>
            <consortium name="NIH - Mammalian Gene Collection (MGC) project"/>
        </authorList>
    </citation>
    <scope>NUCLEOTIDE SEQUENCE [LARGE SCALE MRNA]</scope>
    <source>
        <strain>Crossbred X Angus</strain>
        <tissue>Ileum</tissue>
    </source>
</reference>